<dbReference type="EC" id="2.7.2.11" evidence="1"/>
<dbReference type="EMBL" id="CP000887">
    <property type="protein sequence ID" value="ACD73214.1"/>
    <property type="molecule type" value="Genomic_DNA"/>
</dbReference>
<dbReference type="RefSeq" id="WP_002964922.1">
    <property type="nucleotide sequence ID" value="NC_010742.1"/>
</dbReference>
<dbReference type="SMR" id="B2S805"/>
<dbReference type="GeneID" id="93017819"/>
<dbReference type="KEGG" id="bmc:BAbS19_I17320"/>
<dbReference type="HOGENOM" id="CLU_025400_2_0_5"/>
<dbReference type="UniPathway" id="UPA00098">
    <property type="reaction ID" value="UER00359"/>
</dbReference>
<dbReference type="Proteomes" id="UP000002565">
    <property type="component" value="Chromosome 1"/>
</dbReference>
<dbReference type="GO" id="GO:0005829">
    <property type="term" value="C:cytosol"/>
    <property type="evidence" value="ECO:0007669"/>
    <property type="project" value="TreeGrafter"/>
</dbReference>
<dbReference type="GO" id="GO:0005524">
    <property type="term" value="F:ATP binding"/>
    <property type="evidence" value="ECO:0007669"/>
    <property type="project" value="UniProtKB-KW"/>
</dbReference>
<dbReference type="GO" id="GO:0004349">
    <property type="term" value="F:glutamate 5-kinase activity"/>
    <property type="evidence" value="ECO:0007669"/>
    <property type="project" value="UniProtKB-UniRule"/>
</dbReference>
<dbReference type="GO" id="GO:0003723">
    <property type="term" value="F:RNA binding"/>
    <property type="evidence" value="ECO:0007669"/>
    <property type="project" value="InterPro"/>
</dbReference>
<dbReference type="GO" id="GO:0055129">
    <property type="term" value="P:L-proline biosynthetic process"/>
    <property type="evidence" value="ECO:0007669"/>
    <property type="project" value="UniProtKB-UniRule"/>
</dbReference>
<dbReference type="CDD" id="cd04242">
    <property type="entry name" value="AAK_G5K_ProB"/>
    <property type="match status" value="1"/>
</dbReference>
<dbReference type="CDD" id="cd21157">
    <property type="entry name" value="PUA_G5K"/>
    <property type="match status" value="1"/>
</dbReference>
<dbReference type="FunFam" id="2.30.130.10:FF:000007">
    <property type="entry name" value="Glutamate 5-kinase"/>
    <property type="match status" value="1"/>
</dbReference>
<dbReference type="FunFam" id="3.40.1160.10:FF:000018">
    <property type="entry name" value="Glutamate 5-kinase"/>
    <property type="match status" value="1"/>
</dbReference>
<dbReference type="Gene3D" id="3.40.1160.10">
    <property type="entry name" value="Acetylglutamate kinase-like"/>
    <property type="match status" value="1"/>
</dbReference>
<dbReference type="Gene3D" id="2.30.130.10">
    <property type="entry name" value="PUA domain"/>
    <property type="match status" value="1"/>
</dbReference>
<dbReference type="HAMAP" id="MF_00456">
    <property type="entry name" value="ProB"/>
    <property type="match status" value="1"/>
</dbReference>
<dbReference type="InterPro" id="IPR036393">
    <property type="entry name" value="AceGlu_kinase-like_sf"/>
</dbReference>
<dbReference type="InterPro" id="IPR001048">
    <property type="entry name" value="Asp/Glu/Uridylate_kinase"/>
</dbReference>
<dbReference type="InterPro" id="IPR041739">
    <property type="entry name" value="G5K_ProB"/>
</dbReference>
<dbReference type="InterPro" id="IPR001057">
    <property type="entry name" value="Glu/AcGlu_kinase"/>
</dbReference>
<dbReference type="InterPro" id="IPR011529">
    <property type="entry name" value="Glu_5kinase"/>
</dbReference>
<dbReference type="InterPro" id="IPR005715">
    <property type="entry name" value="Glu_5kinase/COase_Synthase"/>
</dbReference>
<dbReference type="InterPro" id="IPR019797">
    <property type="entry name" value="Glutamate_5-kinase_CS"/>
</dbReference>
<dbReference type="InterPro" id="IPR002478">
    <property type="entry name" value="PUA"/>
</dbReference>
<dbReference type="InterPro" id="IPR015947">
    <property type="entry name" value="PUA-like_sf"/>
</dbReference>
<dbReference type="InterPro" id="IPR036974">
    <property type="entry name" value="PUA_sf"/>
</dbReference>
<dbReference type="NCBIfam" id="TIGR01027">
    <property type="entry name" value="proB"/>
    <property type="match status" value="1"/>
</dbReference>
<dbReference type="PANTHER" id="PTHR43654">
    <property type="entry name" value="GLUTAMATE 5-KINASE"/>
    <property type="match status" value="1"/>
</dbReference>
<dbReference type="PANTHER" id="PTHR43654:SF1">
    <property type="entry name" value="ISOPENTENYL PHOSPHATE KINASE"/>
    <property type="match status" value="1"/>
</dbReference>
<dbReference type="Pfam" id="PF00696">
    <property type="entry name" value="AA_kinase"/>
    <property type="match status" value="1"/>
</dbReference>
<dbReference type="Pfam" id="PF01472">
    <property type="entry name" value="PUA"/>
    <property type="match status" value="1"/>
</dbReference>
<dbReference type="PIRSF" id="PIRSF000729">
    <property type="entry name" value="GK"/>
    <property type="match status" value="1"/>
</dbReference>
<dbReference type="PRINTS" id="PR00474">
    <property type="entry name" value="GLU5KINASE"/>
</dbReference>
<dbReference type="SMART" id="SM00359">
    <property type="entry name" value="PUA"/>
    <property type="match status" value="1"/>
</dbReference>
<dbReference type="SUPFAM" id="SSF53633">
    <property type="entry name" value="Carbamate kinase-like"/>
    <property type="match status" value="1"/>
</dbReference>
<dbReference type="SUPFAM" id="SSF88697">
    <property type="entry name" value="PUA domain-like"/>
    <property type="match status" value="1"/>
</dbReference>
<dbReference type="PROSITE" id="PS00902">
    <property type="entry name" value="GLUTAMATE_5_KINASE"/>
    <property type="match status" value="1"/>
</dbReference>
<dbReference type="PROSITE" id="PS50890">
    <property type="entry name" value="PUA"/>
    <property type="match status" value="1"/>
</dbReference>
<gene>
    <name evidence="1" type="primary">proB</name>
    <name type="ordered locus">BAbS19_I17320</name>
</gene>
<organism>
    <name type="scientific">Brucella abortus (strain S19)</name>
    <dbReference type="NCBI Taxonomy" id="430066"/>
    <lineage>
        <taxon>Bacteria</taxon>
        <taxon>Pseudomonadati</taxon>
        <taxon>Pseudomonadota</taxon>
        <taxon>Alphaproteobacteria</taxon>
        <taxon>Hyphomicrobiales</taxon>
        <taxon>Brucellaceae</taxon>
        <taxon>Brucella/Ochrobactrum group</taxon>
        <taxon>Brucella</taxon>
    </lineage>
</organism>
<reference key="1">
    <citation type="journal article" date="2008" name="PLoS ONE">
        <title>Genome sequence of Brucella abortus vaccine strain S19 compared to virulent strains yields candidate virulence genes.</title>
        <authorList>
            <person name="Crasta O.R."/>
            <person name="Folkerts O."/>
            <person name="Fei Z."/>
            <person name="Mane S.P."/>
            <person name="Evans C."/>
            <person name="Martino-Catt S."/>
            <person name="Bricker B."/>
            <person name="Yu G."/>
            <person name="Du L."/>
            <person name="Sobral B.W."/>
        </authorList>
    </citation>
    <scope>NUCLEOTIDE SEQUENCE [LARGE SCALE GENOMIC DNA]</scope>
    <source>
        <strain>S19</strain>
    </source>
</reference>
<feature type="chain" id="PRO_1000125215" description="Glutamate 5-kinase">
    <location>
        <begin position="1"/>
        <end position="378"/>
    </location>
</feature>
<feature type="domain" description="PUA" evidence="1">
    <location>
        <begin position="279"/>
        <end position="356"/>
    </location>
</feature>
<feature type="binding site" evidence="1">
    <location>
        <position position="14"/>
    </location>
    <ligand>
        <name>ATP</name>
        <dbReference type="ChEBI" id="CHEBI:30616"/>
    </ligand>
</feature>
<feature type="binding site" evidence="1">
    <location>
        <position position="54"/>
    </location>
    <ligand>
        <name>substrate</name>
    </ligand>
</feature>
<feature type="binding site" evidence="1">
    <location>
        <position position="141"/>
    </location>
    <ligand>
        <name>substrate</name>
    </ligand>
</feature>
<feature type="binding site" evidence="1">
    <location>
        <position position="153"/>
    </location>
    <ligand>
        <name>substrate</name>
    </ligand>
</feature>
<feature type="binding site" evidence="1">
    <location>
        <begin position="173"/>
        <end position="174"/>
    </location>
    <ligand>
        <name>ATP</name>
        <dbReference type="ChEBI" id="CHEBI:30616"/>
    </ligand>
</feature>
<evidence type="ECO:0000255" key="1">
    <source>
        <dbReference type="HAMAP-Rule" id="MF_00456"/>
    </source>
</evidence>
<proteinExistence type="inferred from homology"/>
<sequence length="378" mass="39873">MLKKLKDYRRIVVKIGSALLVDRATGLKRKWLESLGQDIAALQHAGVEVLVVSSGAIALGRTVLGLPKKALKLEESQAAAAAGQIALAKAYADVLGGHGIKSGQILVTLSDTEERRRYLNARATIETLLKLKAVPIINENDTVATTEIRYGDNDRLAARVATMMGADLLILLSDIDGLYTAPPHKNPDAQFLPFVETITPQIEAMAGAAASELSRGGMKTKLDAGKIANAAGTAMIITSGTRFGPLSAIDRGERATLFEAAHAPVNAWKTWISGNLEPAGRLTVDAGAVKALKSGKSLLPAGVKEVDGDFERGDTVAVMNEDGREIARGLIAYDAADARKVAGHKSDEISAILGYDARAAMIHRNDLVVRAASDAKAA</sequence>
<comment type="function">
    <text evidence="1">Catalyzes the transfer of a phosphate group to glutamate to form L-glutamate 5-phosphate.</text>
</comment>
<comment type="catalytic activity">
    <reaction evidence="1">
        <text>L-glutamate + ATP = L-glutamyl 5-phosphate + ADP</text>
        <dbReference type="Rhea" id="RHEA:14877"/>
        <dbReference type="ChEBI" id="CHEBI:29985"/>
        <dbReference type="ChEBI" id="CHEBI:30616"/>
        <dbReference type="ChEBI" id="CHEBI:58274"/>
        <dbReference type="ChEBI" id="CHEBI:456216"/>
        <dbReference type="EC" id="2.7.2.11"/>
    </reaction>
</comment>
<comment type="pathway">
    <text evidence="1">Amino-acid biosynthesis; L-proline biosynthesis; L-glutamate 5-semialdehyde from L-glutamate: step 1/2.</text>
</comment>
<comment type="subcellular location">
    <subcellularLocation>
        <location evidence="1">Cytoplasm</location>
    </subcellularLocation>
</comment>
<comment type="similarity">
    <text evidence="1">Belongs to the glutamate 5-kinase family.</text>
</comment>
<name>PROB_BRUA1</name>
<keyword id="KW-0028">Amino-acid biosynthesis</keyword>
<keyword id="KW-0067">ATP-binding</keyword>
<keyword id="KW-0963">Cytoplasm</keyword>
<keyword id="KW-0418">Kinase</keyword>
<keyword id="KW-0547">Nucleotide-binding</keyword>
<keyword id="KW-0641">Proline biosynthesis</keyword>
<keyword id="KW-0808">Transferase</keyword>
<accession>B2S805</accession>
<protein>
    <recommendedName>
        <fullName evidence="1">Glutamate 5-kinase</fullName>
        <ecNumber evidence="1">2.7.2.11</ecNumber>
    </recommendedName>
    <alternativeName>
        <fullName evidence="1">Gamma-glutamyl kinase</fullName>
        <shortName evidence="1">GK</shortName>
    </alternativeName>
</protein>